<dbReference type="EC" id="2.7.11.1"/>
<dbReference type="EMBL" id="LT708304">
    <property type="protein sequence ID" value="SIU01732.1"/>
    <property type="molecule type" value="Genomic_DNA"/>
</dbReference>
<dbReference type="RefSeq" id="NP_856752.1">
    <property type="nucleotide sequence ID" value="NC_002945.3"/>
</dbReference>
<dbReference type="RefSeq" id="WP_003416064.1">
    <property type="nucleotide sequence ID" value="NC_002945.4"/>
</dbReference>
<dbReference type="SMR" id="Q7TXA9"/>
<dbReference type="KEGG" id="mbo:BQ2027_MB3107C"/>
<dbReference type="PATRIC" id="fig|233413.5.peg.3414"/>
<dbReference type="Proteomes" id="UP000001419">
    <property type="component" value="Chromosome"/>
</dbReference>
<dbReference type="GO" id="GO:0005524">
    <property type="term" value="F:ATP binding"/>
    <property type="evidence" value="ECO:0007669"/>
    <property type="project" value="UniProtKB-KW"/>
</dbReference>
<dbReference type="GO" id="GO:0046872">
    <property type="term" value="F:metal ion binding"/>
    <property type="evidence" value="ECO:0007669"/>
    <property type="project" value="UniProtKB-KW"/>
</dbReference>
<dbReference type="GO" id="GO:0106310">
    <property type="term" value="F:protein serine kinase activity"/>
    <property type="evidence" value="ECO:0007669"/>
    <property type="project" value="RHEA"/>
</dbReference>
<dbReference type="GO" id="GO:0004674">
    <property type="term" value="F:protein serine/threonine kinase activity"/>
    <property type="evidence" value="ECO:0007669"/>
    <property type="project" value="UniProtKB-KW"/>
</dbReference>
<dbReference type="CDD" id="cd14014">
    <property type="entry name" value="STKc_PknB_like"/>
    <property type="match status" value="1"/>
</dbReference>
<dbReference type="FunFam" id="3.40.50.300:FF:002867">
    <property type="entry name" value="Serine/threonine-protein kinase PknK"/>
    <property type="match status" value="1"/>
</dbReference>
<dbReference type="Gene3D" id="3.40.50.300">
    <property type="entry name" value="P-loop containing nucleotide triphosphate hydrolases"/>
    <property type="match status" value="1"/>
</dbReference>
<dbReference type="Gene3D" id="3.30.200.20">
    <property type="entry name" value="Phosphorylase Kinase, domain 1"/>
    <property type="match status" value="1"/>
</dbReference>
<dbReference type="Gene3D" id="1.10.510.10">
    <property type="entry name" value="Transferase(Phosphotransferase) domain 1"/>
    <property type="match status" value="1"/>
</dbReference>
<dbReference type="InterPro" id="IPR041664">
    <property type="entry name" value="AAA_16"/>
</dbReference>
<dbReference type="InterPro" id="IPR011009">
    <property type="entry name" value="Kinase-like_dom_sf"/>
</dbReference>
<dbReference type="InterPro" id="IPR027417">
    <property type="entry name" value="P-loop_NTPase"/>
</dbReference>
<dbReference type="InterPro" id="IPR000719">
    <property type="entry name" value="Prot_kinase_dom"/>
</dbReference>
<dbReference type="InterPro" id="IPR017441">
    <property type="entry name" value="Protein_kinase_ATP_BS"/>
</dbReference>
<dbReference type="InterPro" id="IPR016236">
    <property type="entry name" value="Ser/Thr_kinase_PknK_prd"/>
</dbReference>
<dbReference type="PANTHER" id="PTHR43289">
    <property type="entry name" value="MITOGEN-ACTIVATED PROTEIN KINASE KINASE KINASE 20-RELATED"/>
    <property type="match status" value="1"/>
</dbReference>
<dbReference type="PANTHER" id="PTHR43289:SF6">
    <property type="entry name" value="SERINE_THREONINE-PROTEIN KINASE NEKL-3"/>
    <property type="match status" value="1"/>
</dbReference>
<dbReference type="Pfam" id="PF13191">
    <property type="entry name" value="AAA_16"/>
    <property type="match status" value="1"/>
</dbReference>
<dbReference type="Pfam" id="PF00069">
    <property type="entry name" value="Pkinase"/>
    <property type="match status" value="1"/>
</dbReference>
<dbReference type="PIRSF" id="PIRSF000574">
    <property type="entry name" value="Ser/Thr_PK_PknK_prd"/>
    <property type="match status" value="1"/>
</dbReference>
<dbReference type="SMART" id="SM00220">
    <property type="entry name" value="S_TKc"/>
    <property type="match status" value="1"/>
</dbReference>
<dbReference type="SUPFAM" id="SSF52540">
    <property type="entry name" value="P-loop containing nucleoside triphosphate hydrolases"/>
    <property type="match status" value="1"/>
</dbReference>
<dbReference type="SUPFAM" id="SSF56112">
    <property type="entry name" value="Protein kinase-like (PK-like)"/>
    <property type="match status" value="1"/>
</dbReference>
<dbReference type="PROSITE" id="PS00107">
    <property type="entry name" value="PROTEIN_KINASE_ATP"/>
    <property type="match status" value="1"/>
</dbReference>
<dbReference type="PROSITE" id="PS50011">
    <property type="entry name" value="PROTEIN_KINASE_DOM"/>
    <property type="match status" value="1"/>
</dbReference>
<protein>
    <recommendedName>
        <fullName>Serine/threonine-protein kinase PknK</fullName>
        <ecNumber>2.7.11.1</ecNumber>
    </recommendedName>
    <alternativeName>
        <fullName>Protein kinase K</fullName>
    </alternativeName>
</protein>
<gene>
    <name type="primary">pknK</name>
    <name type="ordered locus">BQ2027_MB3107C</name>
</gene>
<evidence type="ECO:0000250" key="1"/>
<evidence type="ECO:0000255" key="2">
    <source>
        <dbReference type="PROSITE-ProRule" id="PRU00159"/>
    </source>
</evidence>
<evidence type="ECO:0000256" key="3">
    <source>
        <dbReference type="SAM" id="MobiDB-lite"/>
    </source>
</evidence>
<name>PKNK_MYCBO</name>
<organism>
    <name type="scientific">Mycobacterium bovis (strain ATCC BAA-935 / AF2122/97)</name>
    <dbReference type="NCBI Taxonomy" id="233413"/>
    <lineage>
        <taxon>Bacteria</taxon>
        <taxon>Bacillati</taxon>
        <taxon>Actinomycetota</taxon>
        <taxon>Actinomycetes</taxon>
        <taxon>Mycobacteriales</taxon>
        <taxon>Mycobacteriaceae</taxon>
        <taxon>Mycobacterium</taxon>
        <taxon>Mycobacterium tuberculosis complex</taxon>
    </lineage>
</organism>
<proteinExistence type="inferred from homology"/>
<sequence>MTDVDPHATRRDLVPNIPAELLEAGFDNVEEIGRGGFGVVYRCVQPSLDRAVAVKVLSTDLDRDNLERFLREQRAMGRLSGHPHIVTVLQVGVLAGGRPFIVMPYHAKNSLETLIRRHGPLDWRETLSIGVKLAGALEAAHRVGTLHRDVKPGNILLTDYGEPQLTDFGIARIAGGFETATGVIAGSPAFTAPEVLEGASPTPASDVYSLGATLFCVLTGHAAYERRSGERVIAQFLRITSQPIPDLRKQGLPADVAAAIERAMARHPADRPATAADVGEELRDVQRRNGVSVDEMPLPVELGVERRRSPEAHAAHRHTGGGTPTVPTPPTPATKYRPSVPTGSLVTRSRLTDILRAGGRRRLILIHAPSGFGKSTLAAQWREELSRDGAAVAWLTIDNDDNNEVWFLSHLLESIRRVRPTLAESLGHVLEEHGDDAGRYVLTSLIDEIHENDDRIAVVIDDWHRVSDSRTQAALGFLLDNGCHHLQLIVTSWSRAGLPVGRLRIGDELAEIDSAALRFDTDEAAALLNDAGGLRLPRADVQALTTSTDGWAAALRLAALSLRGGGDATQLLRGLSGASDVIHEFLSENVLDTLEPELREFLLVASVTERTCGGLASALAGITNGRAMLEEAEHRGLFLQRTEDDPNWFRFHQMFADFLHRRLERGGSHRVAELHRRASAWFAENGYLHEAVDHALAAGDPARAVDLVEQDETNLPEQSKMTTLLAIVQKLPTSMVVSRARLQLAIAWANILLQRPAPATGALNRFETALGRAELPEATQADLRAEADVLRAVAEVFADRVERVDDLLAEAMSRPDTLPPRVPGTAGNTAALAAICRFEFAEVYPLLDWAAPYQEMMGPFGTVYAQCLRGMAARNRLDIVAALQNFRTAFEVGTAVGAHSHAARLAGSLLAELLYETGDLAGAGRLMDESYLLGSEGGAVDYLAARYVIGARVKAAQGDHEGAADRLSTGGDTAVQLGLPRLAARINNERIRLGIALPAAVAADLLAPRTIPRDNGIATMTAELDEDSAVRLLSAGDSADRDQACQRAGALAAAIDGTRRPLAALQAQILHIETLAATGRESDARNELAPVATKCAELGLSRLLVDAGLA</sequence>
<reference key="1">
    <citation type="journal article" date="2003" name="Proc. Natl. Acad. Sci. U.S.A.">
        <title>The complete genome sequence of Mycobacterium bovis.</title>
        <authorList>
            <person name="Garnier T."/>
            <person name="Eiglmeier K."/>
            <person name="Camus J.-C."/>
            <person name="Medina N."/>
            <person name="Mansoor H."/>
            <person name="Pryor M."/>
            <person name="Duthoy S."/>
            <person name="Grondin S."/>
            <person name="Lacroix C."/>
            <person name="Monsempe C."/>
            <person name="Simon S."/>
            <person name="Harris B."/>
            <person name="Atkin R."/>
            <person name="Doggett J."/>
            <person name="Mayes R."/>
            <person name="Keating L."/>
            <person name="Wheeler P.R."/>
            <person name="Parkhill J."/>
            <person name="Barrell B.G."/>
            <person name="Cole S.T."/>
            <person name="Gordon S.V."/>
            <person name="Hewinson R.G."/>
        </authorList>
    </citation>
    <scope>NUCLEOTIDE SEQUENCE [LARGE SCALE GENOMIC DNA]</scope>
    <source>
        <strain>ATCC BAA-935 / AF2122/97</strain>
    </source>
</reference>
<reference key="2">
    <citation type="journal article" date="2017" name="Genome Announc.">
        <title>Updated reference genome sequence and annotation of Mycobacterium bovis AF2122/97.</title>
        <authorList>
            <person name="Malone K.M."/>
            <person name="Farrell D."/>
            <person name="Stuber T.P."/>
            <person name="Schubert O.T."/>
            <person name="Aebersold R."/>
            <person name="Robbe-Austerman S."/>
            <person name="Gordon S.V."/>
        </authorList>
    </citation>
    <scope>NUCLEOTIDE SEQUENCE [LARGE SCALE GENOMIC DNA]</scope>
    <scope>GENOME REANNOTATION</scope>
    <source>
        <strain>ATCC BAA-935 / AF2122/97</strain>
    </source>
</reference>
<accession>Q7TXA9</accession>
<accession>A0A1R3Y316</accession>
<accession>X2BNB1</accession>
<keyword id="KW-0067">ATP-binding</keyword>
<keyword id="KW-0418">Kinase</keyword>
<keyword id="KW-0460">Magnesium</keyword>
<keyword id="KW-0479">Metal-binding</keyword>
<keyword id="KW-0547">Nucleotide-binding</keyword>
<keyword id="KW-1185">Reference proteome</keyword>
<keyword id="KW-0723">Serine/threonine-protein kinase</keyword>
<keyword id="KW-0808">Transferase</keyword>
<comment type="catalytic activity">
    <reaction>
        <text>L-seryl-[protein] + ATP = O-phospho-L-seryl-[protein] + ADP + H(+)</text>
        <dbReference type="Rhea" id="RHEA:17989"/>
        <dbReference type="Rhea" id="RHEA-COMP:9863"/>
        <dbReference type="Rhea" id="RHEA-COMP:11604"/>
        <dbReference type="ChEBI" id="CHEBI:15378"/>
        <dbReference type="ChEBI" id="CHEBI:29999"/>
        <dbReference type="ChEBI" id="CHEBI:30616"/>
        <dbReference type="ChEBI" id="CHEBI:83421"/>
        <dbReference type="ChEBI" id="CHEBI:456216"/>
        <dbReference type="EC" id="2.7.11.1"/>
    </reaction>
</comment>
<comment type="catalytic activity">
    <reaction>
        <text>L-threonyl-[protein] + ATP = O-phospho-L-threonyl-[protein] + ADP + H(+)</text>
        <dbReference type="Rhea" id="RHEA:46608"/>
        <dbReference type="Rhea" id="RHEA-COMP:11060"/>
        <dbReference type="Rhea" id="RHEA-COMP:11605"/>
        <dbReference type="ChEBI" id="CHEBI:15378"/>
        <dbReference type="ChEBI" id="CHEBI:30013"/>
        <dbReference type="ChEBI" id="CHEBI:30616"/>
        <dbReference type="ChEBI" id="CHEBI:61977"/>
        <dbReference type="ChEBI" id="CHEBI:456216"/>
        <dbReference type="EC" id="2.7.11.1"/>
    </reaction>
</comment>
<comment type="similarity">
    <text evidence="2">Belongs to the protein kinase superfamily. Ser/Thr protein kinase family.</text>
</comment>
<feature type="chain" id="PRO_0000171223" description="Serine/threonine-protein kinase PknK">
    <location>
        <begin position="1"/>
        <end position="1110"/>
    </location>
</feature>
<feature type="domain" description="Protein kinase" evidence="2">
    <location>
        <begin position="26"/>
        <end position="283"/>
    </location>
</feature>
<feature type="region of interest" description="Disordered" evidence="3">
    <location>
        <begin position="308"/>
        <end position="343"/>
    </location>
</feature>
<feature type="active site" description="Proton acceptor" evidence="2">
    <location>
        <position position="148"/>
    </location>
</feature>
<feature type="binding site" evidence="2">
    <location>
        <begin position="32"/>
        <end position="40"/>
    </location>
    <ligand>
        <name>ATP</name>
        <dbReference type="ChEBI" id="CHEBI:30616"/>
    </ligand>
</feature>
<feature type="binding site" evidence="2">
    <location>
        <position position="55"/>
    </location>
    <ligand>
        <name>ATP</name>
        <dbReference type="ChEBI" id="CHEBI:30616"/>
    </ligand>
</feature>
<feature type="binding site" evidence="1">
    <location>
        <position position="154"/>
    </location>
    <ligand>
        <name>Mg(2+)</name>
        <dbReference type="ChEBI" id="CHEBI:18420"/>
    </ligand>
</feature>
<feature type="binding site" evidence="1">
    <location>
        <position position="167"/>
    </location>
    <ligand>
        <name>Mg(2+)</name>
        <dbReference type="ChEBI" id="CHEBI:18420"/>
    </ligand>
</feature>